<name>FKBP2_SPIOL</name>
<reference evidence="5" key="1">
    <citation type="journal article" date="2002" name="J. Biol. Chem.">
        <title>Proteome map of the chloroplast lumen of Arabidopsis thaliana.</title>
        <authorList>
            <person name="Schubert M."/>
            <person name="Petersson U.A."/>
            <person name="Haas B.J."/>
            <person name="Funk C."/>
            <person name="Schroeder W.P."/>
            <person name="Kieselbach T."/>
        </authorList>
    </citation>
    <scope>PROTEIN SEQUENCE</scope>
    <scope>SUBCELLULAR LOCATION</scope>
    <source>
        <tissue evidence="3">Leaf</tissue>
    </source>
</reference>
<keyword id="KW-0150">Chloroplast</keyword>
<keyword id="KW-0903">Direct protein sequencing</keyword>
<keyword id="KW-0413">Isomerase</keyword>
<keyword id="KW-0934">Plastid</keyword>
<keyword id="KW-1185">Reference proteome</keyword>
<keyword id="KW-0697">Rotamase</keyword>
<keyword id="KW-0793">Thylakoid</keyword>
<feature type="chain" id="PRO_0000311683" description="Probable FKBP-type peptidyl-prolyl cis-trans isomerase 2, chloroplastic">
    <location>
        <begin position="1"/>
        <end position="17" status="greater than"/>
    </location>
</feature>
<feature type="non-terminal residue" evidence="4">
    <location>
        <position position="17"/>
    </location>
</feature>
<accession>P83061</accession>
<dbReference type="EC" id="5.2.1.8"/>
<dbReference type="Proteomes" id="UP001155700">
    <property type="component" value="Unplaced"/>
</dbReference>
<dbReference type="GO" id="GO:0009543">
    <property type="term" value="C:chloroplast thylakoid lumen"/>
    <property type="evidence" value="ECO:0007669"/>
    <property type="project" value="UniProtKB-SubCell"/>
</dbReference>
<dbReference type="GO" id="GO:0003755">
    <property type="term" value="F:peptidyl-prolyl cis-trans isomerase activity"/>
    <property type="evidence" value="ECO:0007669"/>
    <property type="project" value="UniProtKB-KW"/>
</dbReference>
<evidence type="ECO:0000250" key="1">
    <source>
        <dbReference type="UniProtKB" id="P45878"/>
    </source>
</evidence>
<evidence type="ECO:0000255" key="2"/>
<evidence type="ECO:0000269" key="3">
    <source>
    </source>
</evidence>
<evidence type="ECO:0000303" key="4">
    <source>
    </source>
</evidence>
<evidence type="ECO:0000305" key="5"/>
<sequence>AGLPPEEKPKLCDAACE</sequence>
<protein>
    <recommendedName>
        <fullName>Probable FKBP-type peptidyl-prolyl cis-trans isomerase 2, chloroplastic</fullName>
        <shortName>PPIase</shortName>
        <ecNumber>5.2.1.8</ecNumber>
    </recommendedName>
    <alternativeName>
        <fullName>Rotamase</fullName>
    </alternativeName>
</protein>
<proteinExistence type="evidence at protein level"/>
<comment type="function">
    <text evidence="1">PPIases accelerate the folding of proteins. It catalyzes the cis-trans isomerization of proline imidic peptide bonds in oligopeptides (By similarity).</text>
</comment>
<comment type="catalytic activity">
    <reaction evidence="1">
        <text>[protein]-peptidylproline (omega=180) = [protein]-peptidylproline (omega=0)</text>
        <dbReference type="Rhea" id="RHEA:16237"/>
        <dbReference type="Rhea" id="RHEA-COMP:10747"/>
        <dbReference type="Rhea" id="RHEA-COMP:10748"/>
        <dbReference type="ChEBI" id="CHEBI:83833"/>
        <dbReference type="ChEBI" id="CHEBI:83834"/>
        <dbReference type="EC" id="5.2.1.8"/>
    </reaction>
</comment>
<comment type="subcellular location">
    <subcellularLocation>
        <location evidence="3">Plastid</location>
        <location evidence="3">Chloroplast thylakoid lumen</location>
    </subcellularLocation>
</comment>
<comment type="similarity">
    <text evidence="2">Belongs to the FKBP-type PPIase family.</text>
</comment>
<organism>
    <name type="scientific">Spinacia oleracea</name>
    <name type="common">Spinach</name>
    <dbReference type="NCBI Taxonomy" id="3562"/>
    <lineage>
        <taxon>Eukaryota</taxon>
        <taxon>Viridiplantae</taxon>
        <taxon>Streptophyta</taxon>
        <taxon>Embryophyta</taxon>
        <taxon>Tracheophyta</taxon>
        <taxon>Spermatophyta</taxon>
        <taxon>Magnoliopsida</taxon>
        <taxon>eudicotyledons</taxon>
        <taxon>Gunneridae</taxon>
        <taxon>Pentapetalae</taxon>
        <taxon>Caryophyllales</taxon>
        <taxon>Chenopodiaceae</taxon>
        <taxon>Chenopodioideae</taxon>
        <taxon>Anserineae</taxon>
        <taxon>Spinacia</taxon>
    </lineage>
</organism>